<sequence length="82" mass="9831">MDSHFVYIVKCSDGSLYTGYAKDVNARVEKHNRGQGAKYTKVRRPVHLVYQEMYETKSEALKREYEIKTYTRQKKLRLIKER</sequence>
<dbReference type="EMBL" id="CP000253">
    <property type="protein sequence ID" value="ABD29613.1"/>
    <property type="molecule type" value="Genomic_DNA"/>
</dbReference>
<dbReference type="RefSeq" id="WP_000377064.1">
    <property type="nucleotide sequence ID" value="NZ_LS483365.1"/>
</dbReference>
<dbReference type="RefSeq" id="YP_499037.1">
    <property type="nucleotide sequence ID" value="NC_007795.1"/>
</dbReference>
<dbReference type="SMR" id="Q2G2W7"/>
<dbReference type="STRING" id="93061.SAOUHSC_00458"/>
<dbReference type="PaxDb" id="1280-SAXN108_0539"/>
<dbReference type="GeneID" id="3920318"/>
<dbReference type="KEGG" id="sao:SAOUHSC_00458"/>
<dbReference type="PATRIC" id="fig|93061.5.peg.414"/>
<dbReference type="eggNOG" id="COG2827">
    <property type="taxonomic scope" value="Bacteria"/>
</dbReference>
<dbReference type="HOGENOM" id="CLU_135650_0_3_9"/>
<dbReference type="OrthoDB" id="9807770at2"/>
<dbReference type="PRO" id="PR:Q2G2W7"/>
<dbReference type="Proteomes" id="UP000008816">
    <property type="component" value="Chromosome"/>
</dbReference>
<dbReference type="CDD" id="cd10456">
    <property type="entry name" value="GIY-YIG_UPF0213"/>
    <property type="match status" value="1"/>
</dbReference>
<dbReference type="Gene3D" id="3.40.1440.10">
    <property type="entry name" value="GIY-YIG endonuclease"/>
    <property type="match status" value="1"/>
</dbReference>
<dbReference type="InterPro" id="IPR000305">
    <property type="entry name" value="GIY-YIG_endonuc"/>
</dbReference>
<dbReference type="InterPro" id="IPR035901">
    <property type="entry name" value="GIY-YIG_endonuc_sf"/>
</dbReference>
<dbReference type="InterPro" id="IPR050190">
    <property type="entry name" value="UPF0213_domain"/>
</dbReference>
<dbReference type="PANTHER" id="PTHR34477">
    <property type="entry name" value="UPF0213 PROTEIN YHBQ"/>
    <property type="match status" value="1"/>
</dbReference>
<dbReference type="PANTHER" id="PTHR34477:SF1">
    <property type="entry name" value="UPF0213 PROTEIN YHBQ"/>
    <property type="match status" value="1"/>
</dbReference>
<dbReference type="Pfam" id="PF01541">
    <property type="entry name" value="GIY-YIG"/>
    <property type="match status" value="1"/>
</dbReference>
<dbReference type="SMART" id="SM00465">
    <property type="entry name" value="GIYc"/>
    <property type="match status" value="1"/>
</dbReference>
<dbReference type="SUPFAM" id="SSF82771">
    <property type="entry name" value="GIY-YIG endonuclease"/>
    <property type="match status" value="1"/>
</dbReference>
<dbReference type="PROSITE" id="PS50164">
    <property type="entry name" value="GIY_YIG"/>
    <property type="match status" value="1"/>
</dbReference>
<accession>Q2G2W7</accession>
<protein>
    <recommendedName>
        <fullName>UPF0213 protein SAOUHSC_00458</fullName>
    </recommendedName>
</protein>
<evidence type="ECO:0000255" key="1">
    <source>
        <dbReference type="PROSITE-ProRule" id="PRU00977"/>
    </source>
</evidence>
<evidence type="ECO:0000305" key="2"/>
<organism>
    <name type="scientific">Staphylococcus aureus (strain NCTC 8325 / PS 47)</name>
    <dbReference type="NCBI Taxonomy" id="93061"/>
    <lineage>
        <taxon>Bacteria</taxon>
        <taxon>Bacillati</taxon>
        <taxon>Bacillota</taxon>
        <taxon>Bacilli</taxon>
        <taxon>Bacillales</taxon>
        <taxon>Staphylococcaceae</taxon>
        <taxon>Staphylococcus</taxon>
    </lineage>
</organism>
<keyword id="KW-1185">Reference proteome</keyword>
<name>Y458_STAA8</name>
<reference key="1">
    <citation type="book" date="2006" name="Gram positive pathogens, 2nd edition">
        <title>The Staphylococcus aureus NCTC 8325 genome.</title>
        <editorList>
            <person name="Fischetti V."/>
            <person name="Novick R."/>
            <person name="Ferretti J."/>
            <person name="Portnoy D."/>
            <person name="Rood J."/>
        </editorList>
        <authorList>
            <person name="Gillaspy A.F."/>
            <person name="Worrell V."/>
            <person name="Orvis J."/>
            <person name="Roe B.A."/>
            <person name="Dyer D.W."/>
            <person name="Iandolo J.J."/>
        </authorList>
    </citation>
    <scope>NUCLEOTIDE SEQUENCE [LARGE SCALE GENOMIC DNA]</scope>
    <source>
        <strain>NCTC 8325 / PS 47</strain>
    </source>
</reference>
<feature type="chain" id="PRO_1000063687" description="UPF0213 protein SAOUHSC_00458">
    <location>
        <begin position="1"/>
        <end position="82"/>
    </location>
</feature>
<feature type="domain" description="GIY-YIG" evidence="1">
    <location>
        <begin position="2"/>
        <end position="77"/>
    </location>
</feature>
<gene>
    <name type="ordered locus">SAOUHSC_00458</name>
</gene>
<comment type="similarity">
    <text evidence="2">Belongs to the UPF0213 family.</text>
</comment>
<proteinExistence type="inferred from homology"/>